<organism>
    <name type="scientific">Streptomyces globisporus</name>
    <dbReference type="NCBI Taxonomy" id="1908"/>
    <lineage>
        <taxon>Bacteria</taxon>
        <taxon>Bacillati</taxon>
        <taxon>Actinomycetota</taxon>
        <taxon>Actinomycetes</taxon>
        <taxon>Kitasatosporales</taxon>
        <taxon>Streptomycetaceae</taxon>
        <taxon>Streptomyces</taxon>
    </lineage>
</organism>
<accession>Q8GMG6</accession>
<feature type="chain" id="PRO_0000454946" description="(3S)-3-amino-3-(3-chloro-4-hydroxyphenyl)propanoyl-[peptidyl-carrier protein SgcC2] monooxygenase">
    <location>
        <begin position="1"/>
        <end position="527"/>
    </location>
</feature>
<feature type="region of interest" description="Disordered" evidence="2">
    <location>
        <begin position="1"/>
        <end position="22"/>
    </location>
</feature>
<feature type="compositionally biased region" description="Basic and acidic residues" evidence="2">
    <location>
        <begin position="1"/>
        <end position="10"/>
    </location>
</feature>
<feature type="binding site" evidence="1">
    <location>
        <begin position="161"/>
        <end position="163"/>
    </location>
    <ligand>
        <name>FAD</name>
        <dbReference type="ChEBI" id="CHEBI:57692"/>
    </ligand>
</feature>
<feature type="binding site" evidence="1">
    <location>
        <begin position="167"/>
        <end position="170"/>
    </location>
    <ligand>
        <name>FAD</name>
        <dbReference type="ChEBI" id="CHEBI:57692"/>
    </ligand>
</feature>
<feature type="binding site" evidence="1">
    <location>
        <position position="202"/>
    </location>
    <ligand>
        <name>FAD</name>
        <dbReference type="ChEBI" id="CHEBI:57692"/>
    </ligand>
</feature>
<feature type="helix" evidence="9">
    <location>
        <begin position="23"/>
        <end position="30"/>
    </location>
</feature>
<feature type="strand" evidence="9">
    <location>
        <begin position="31"/>
        <end position="33"/>
    </location>
</feature>
<feature type="strand" evidence="9">
    <location>
        <begin position="35"/>
        <end position="38"/>
    </location>
</feature>
<feature type="turn" evidence="9">
    <location>
        <begin position="46"/>
        <end position="48"/>
    </location>
</feature>
<feature type="turn" evidence="9">
    <location>
        <begin position="50"/>
        <end position="52"/>
    </location>
</feature>
<feature type="helix" evidence="9">
    <location>
        <begin position="53"/>
        <end position="65"/>
    </location>
</feature>
<feature type="helix" evidence="9">
    <location>
        <begin position="72"/>
        <end position="75"/>
    </location>
</feature>
<feature type="strand" evidence="9">
    <location>
        <begin position="76"/>
        <end position="78"/>
    </location>
</feature>
<feature type="strand" evidence="9">
    <location>
        <begin position="80"/>
        <end position="87"/>
    </location>
</feature>
<feature type="helix" evidence="9">
    <location>
        <begin position="88"/>
        <end position="90"/>
    </location>
</feature>
<feature type="helix" evidence="9">
    <location>
        <begin position="96"/>
        <end position="112"/>
    </location>
</feature>
<feature type="turn" evidence="9">
    <location>
        <begin position="113"/>
        <end position="115"/>
    </location>
</feature>
<feature type="turn" evidence="9">
    <location>
        <begin position="121"/>
        <end position="124"/>
    </location>
</feature>
<feature type="helix" evidence="9">
    <location>
        <begin position="125"/>
        <end position="128"/>
    </location>
</feature>
<feature type="turn" evidence="9">
    <location>
        <begin position="129"/>
        <end position="134"/>
    </location>
</feature>
<feature type="helix" evidence="9">
    <location>
        <begin position="136"/>
        <end position="138"/>
    </location>
</feature>
<feature type="turn" evidence="9">
    <location>
        <begin position="139"/>
        <end position="141"/>
    </location>
</feature>
<feature type="helix" evidence="9">
    <location>
        <begin position="142"/>
        <end position="155"/>
    </location>
</feature>
<feature type="strand" evidence="9">
    <location>
        <begin position="159"/>
        <end position="162"/>
    </location>
</feature>
<feature type="strand" evidence="9">
    <location>
        <begin position="183"/>
        <end position="186"/>
    </location>
</feature>
<feature type="strand" evidence="9">
    <location>
        <begin position="189"/>
        <end position="202"/>
    </location>
</feature>
<feature type="helix" evidence="9">
    <location>
        <begin position="204"/>
        <end position="206"/>
    </location>
</feature>
<feature type="strand" evidence="9">
    <location>
        <begin position="208"/>
        <end position="212"/>
    </location>
</feature>
<feature type="helix" evidence="9">
    <location>
        <begin position="222"/>
        <end position="224"/>
    </location>
</feature>
<feature type="strand" evidence="9">
    <location>
        <begin position="226"/>
        <end position="231"/>
    </location>
</feature>
<feature type="strand" evidence="9">
    <location>
        <begin position="237"/>
        <end position="240"/>
    </location>
</feature>
<feature type="helix" evidence="9">
    <location>
        <begin position="245"/>
        <end position="252"/>
    </location>
</feature>
<feature type="turn" evidence="9">
    <location>
        <begin position="255"/>
        <end position="257"/>
    </location>
</feature>
<feature type="helix" evidence="9">
    <location>
        <begin position="261"/>
        <end position="264"/>
    </location>
</feature>
<feature type="strand" evidence="9">
    <location>
        <begin position="268"/>
        <end position="279"/>
    </location>
</feature>
<feature type="helix" evidence="9">
    <location>
        <begin position="280"/>
        <end position="282"/>
    </location>
</feature>
<feature type="strand" evidence="9">
    <location>
        <begin position="283"/>
        <end position="287"/>
    </location>
</feature>
<feature type="helix" evidence="9">
    <location>
        <begin position="289"/>
        <end position="298"/>
    </location>
</feature>
<feature type="helix" evidence="9">
    <location>
        <begin position="301"/>
        <end position="331"/>
    </location>
</feature>
<feature type="helix" evidence="9">
    <location>
        <begin position="333"/>
        <end position="335"/>
    </location>
</feature>
<feature type="helix" evidence="9">
    <location>
        <begin position="337"/>
        <end position="362"/>
    </location>
</feature>
<feature type="helix" evidence="9">
    <location>
        <begin position="368"/>
        <end position="370"/>
    </location>
</feature>
<feature type="helix" evidence="9">
    <location>
        <begin position="376"/>
        <end position="400"/>
    </location>
</feature>
<feature type="helix" evidence="9">
    <location>
        <begin position="402"/>
        <end position="405"/>
    </location>
</feature>
<feature type="helix" evidence="9">
    <location>
        <begin position="413"/>
        <end position="416"/>
    </location>
</feature>
<feature type="turn" evidence="9">
    <location>
        <begin position="418"/>
        <end position="420"/>
    </location>
</feature>
<feature type="helix" evidence="9">
    <location>
        <begin position="421"/>
        <end position="427"/>
    </location>
</feature>
<feature type="helix" evidence="9">
    <location>
        <begin position="436"/>
        <end position="450"/>
    </location>
</feature>
<feature type="helix" evidence="9">
    <location>
        <begin position="453"/>
        <end position="464"/>
    </location>
</feature>
<feature type="strand" evidence="9">
    <location>
        <begin position="465"/>
        <end position="467"/>
    </location>
</feature>
<feature type="helix" evidence="9">
    <location>
        <begin position="471"/>
        <end position="482"/>
    </location>
</feature>
<feature type="helix" evidence="9">
    <location>
        <begin position="485"/>
        <end position="497"/>
    </location>
</feature>
<feature type="helix" evidence="9">
    <location>
        <begin position="514"/>
        <end position="521"/>
    </location>
</feature>
<feature type="helix" evidence="9">
    <location>
        <begin position="522"/>
        <end position="524"/>
    </location>
</feature>
<protein>
    <recommendedName>
        <fullName evidence="7">(3S)-3-amino-3-(3-chloro-4-hydroxyphenyl)propanoyl-[peptidyl-carrier protein SgcC2] monooxygenase</fullName>
        <ecNumber evidence="4">1.14.14.15</ecNumber>
    </recommendedName>
    <alternativeName>
        <fullName evidence="7">Antibiotic C-1027 biosynthesis two-component monooxygenase system, oxygenase component</fullName>
    </alternativeName>
</protein>
<reference key="1">
    <citation type="journal article" date="2002" name="Science">
        <title>Biosynthesis of the enediyne antitumor antibiotic C-1027.</title>
        <authorList>
            <person name="Liu W."/>
            <person name="Christenson S.D."/>
            <person name="Standage S."/>
            <person name="Shen B."/>
        </authorList>
    </citation>
    <scope>NUCLEOTIDE SEQUENCE [GENOMIC DNA]</scope>
    <scope>PATHWAY</scope>
    <scope>DISRUPTION PHENOTYPE</scope>
    <source>
        <strain>C-1027</strain>
    </source>
</reference>
<reference key="2">
    <citation type="journal article" date="2008" name="J. Am. Chem. Soc.">
        <title>Characterization of the two-component, FAD-dependent monooxygenase SgcC that requires carrier protein-tethered substrates for the biosynthesis of the enediyne antitumor antibiotic C-1027.</title>
        <authorList>
            <person name="Lin S."/>
            <person name="Van Lanen S.G."/>
            <person name="Shen B."/>
        </authorList>
    </citation>
    <scope>FUNCTION</scope>
    <scope>CATALYTIC ACTIVITY</scope>
    <scope>ACTIVITY REGULATION</scope>
    <scope>BIOPHYSICOCHEMICAL PROPERTIES</scope>
    <scope>PATHWAY</scope>
</reference>
<reference evidence="8" key="3">
    <citation type="journal article" date="2016" name="Biochemistry">
        <title>Crystal structures of SgcE6 and SgcC, the two-component monooxygenase that catalyzes hydroxylation of a carrier protein-tethered substrate during the biosynthesis of the enediyne antitumor antibiotic C-1027 in Streptomyces globisporus.</title>
        <authorList>
            <person name="Chang C.Y."/>
            <person name="Lohman J.R."/>
            <person name="Cao H."/>
            <person name="Tan K."/>
            <person name="Rudolf J.D."/>
            <person name="Ma M."/>
            <person name="Xu W."/>
            <person name="Bingman C.A."/>
            <person name="Yennamalli R.M."/>
            <person name="Bigelow L."/>
            <person name="Babnigg G."/>
            <person name="Yan X."/>
            <person name="Joachimiak A."/>
            <person name="Phillips G.N."/>
            <person name="Shen B."/>
        </authorList>
    </citation>
    <scope>X-RAY CRYSTALLOGRAPHY (2.63 ANGSTROMS)</scope>
    <scope>SUBUNIT</scope>
</reference>
<sequence>MPHGAEREASPAEESAGTRPLTGEEYLESLRDAREVYLDGSRVKDVTAHPAFHNPARMTARLYDSLHDPAQKAVLTAPTDAGDGFTHRFFTAPRSVDDLVKDQAAIASWARKSYGWMGRSPDYKASFLGTLGANADFYEPFADNARRWYRESQEKVLYWNHAFLHPPVDRSLPADEVGDVFIHVERETDAGLVVSGAKVVATGSALTHAAFISHWGLPIKDRKFALVATVPMDADGLKVICRPSYSANAATTGSPFDNPLSSRLDENDAILVLDQVLIPWENVFVYGNLGKVHLLAGQSGMIERATFHGCTRLAVKLEFIAGLLAKALDITGAKDFRGVQTRLGEVLAWRNLFWSLSDAAARNPVPWKNGTLLPNPQAGMAYRWFMQIGYPRVLEIVQQDVASGLMYVNSSTEDFRNPETGPYLEKYLRGSDGAGAVERVKVMKLLWDAVGSDFGGRHELYERNYSGNHENTRIELLLSQTASGKLDSYMDFAQACMDEYDLDGWTAPDLESFHAMRSASRDLLGGL</sequence>
<proteinExistence type="evidence at protein level"/>
<comment type="function">
    <text evidence="4">Oxygenase component of a two-component system involved in the biosynthesis of the enediyne antitumor antibiotic C-1027 (PubMed:18426211). Uses FADH(2) supplied by SgcE6 to catalyze the C-5 hydroxylation of (S)-3-chloro-beta-tyrosyl-S-SgcC2 (PubMed:18426211). Can also efficiently catalyze the regioselective hydroxylation of other 3-substituted beta-tyrosyl-S-SgcC2 analogs, including the bromo-, iodo-, fluoro-, and methyl-substituted analogs, but does not accept 3-hydroxy-beta-tyrosyl-S-SgcC2 as a substrate (PubMed:18426211). Is only active with SgcC2 (peptidyl carrier protein)-tethered substrates (PubMed:18426211).</text>
</comment>
<comment type="catalytic activity">
    <reaction evidence="4">
        <text>(3S)-3-amino-3-(3-chloro-4-hydroxyphenyl)propanoyl-[SgcC2 peptidyl-carrier protein] + FADH2 + O2 = (3S)-3-amino-3-(3-chloro-4,5-dihydroxyphenyl)propanoyl-[SgcC2 peptidyl-carrier protein] + FAD + H2O + H(+)</text>
        <dbReference type="Rhea" id="RHEA:41560"/>
        <dbReference type="Rhea" id="RHEA-COMP:9805"/>
        <dbReference type="Rhea" id="RHEA-COMP:9806"/>
        <dbReference type="ChEBI" id="CHEBI:15377"/>
        <dbReference type="ChEBI" id="CHEBI:15378"/>
        <dbReference type="ChEBI" id="CHEBI:15379"/>
        <dbReference type="ChEBI" id="CHEBI:57692"/>
        <dbReference type="ChEBI" id="CHEBI:58307"/>
        <dbReference type="ChEBI" id="CHEBI:78296"/>
        <dbReference type="ChEBI" id="CHEBI:78297"/>
        <dbReference type="EC" id="1.14.14.15"/>
    </reaction>
    <physiologicalReaction direction="left-to-right" evidence="4">
        <dbReference type="Rhea" id="RHEA:41561"/>
    </physiologicalReaction>
</comment>
<comment type="activity regulation">
    <text evidence="4">The SgcE6-SgcC hydroxylation activity decreases in the presence of excess FAD.</text>
</comment>
<comment type="biophysicochemical properties">
    <kinetics>
        <KM evidence="4">742 uM for (S)-3-chloro-beta-tyrosinyl-S-SgcC2</KM>
        <text evidence="4">kcat is 1.4 min(-1).</text>
    </kinetics>
    <phDependence>
        <text evidence="4">Optimum pH is 6.0.</text>
    </phDependence>
</comment>
<comment type="pathway">
    <text evidence="3 4">Antibiotic biosynthesis.</text>
</comment>
<comment type="subunit">
    <text evidence="5">Homotetramer.</text>
</comment>
<comment type="disruption phenotype">
    <text evidence="3">Disruption of the gene abolishes C-1027 production and leads to the formation of 22-deshydroxy-C-1027.</text>
</comment>
<comment type="similarity">
    <text evidence="7">Belongs to the FADH(2)-utilizing monooxygenase family.</text>
</comment>
<dbReference type="EC" id="1.14.14.15" evidence="4"/>
<dbReference type="EMBL" id="AY048670">
    <property type="protein sequence ID" value="AAL06674.1"/>
    <property type="molecule type" value="Genomic_DNA"/>
</dbReference>
<dbReference type="PDB" id="4OO2">
    <property type="method" value="X-ray"/>
    <property type="resolution" value="2.63 A"/>
    <property type="chains" value="A/B/C/D=1-527"/>
</dbReference>
<dbReference type="PDBsum" id="4OO2"/>
<dbReference type="SMR" id="Q8GMG6"/>
<dbReference type="BRENDA" id="1.14.14.15">
    <property type="organism ID" value="5933"/>
</dbReference>
<dbReference type="EvolutionaryTrace" id="Q8GMG6"/>
<dbReference type="GO" id="GO:0004497">
    <property type="term" value="F:monooxygenase activity"/>
    <property type="evidence" value="ECO:0007669"/>
    <property type="project" value="UniProtKB-KW"/>
</dbReference>
<dbReference type="GO" id="GO:0016627">
    <property type="term" value="F:oxidoreductase activity, acting on the CH-CH group of donors"/>
    <property type="evidence" value="ECO:0007669"/>
    <property type="project" value="InterPro"/>
</dbReference>
<dbReference type="GO" id="GO:0017000">
    <property type="term" value="P:antibiotic biosynthetic process"/>
    <property type="evidence" value="ECO:0007669"/>
    <property type="project" value="UniProtKB-KW"/>
</dbReference>
<dbReference type="FunFam" id="2.40.110.10:FF:000026">
    <property type="entry name" value="4-hydroxyphenylacetate 3-monooxygenase oxygenase component"/>
    <property type="match status" value="1"/>
</dbReference>
<dbReference type="Gene3D" id="1.10.3140.10">
    <property type="entry name" value="4-hydroxybutyryl-coa dehydratase, domain 1"/>
    <property type="match status" value="1"/>
</dbReference>
<dbReference type="Gene3D" id="2.40.110.10">
    <property type="entry name" value="Butyryl-CoA Dehydrogenase, subunit A, domain 2"/>
    <property type="match status" value="1"/>
</dbReference>
<dbReference type="Gene3D" id="1.20.140.10">
    <property type="entry name" value="Butyryl-CoA Dehydrogenase, subunit A, domain 3"/>
    <property type="match status" value="1"/>
</dbReference>
<dbReference type="InterPro" id="IPR046373">
    <property type="entry name" value="Acyl-CoA_Oxase/DH_mid-dom_sf"/>
</dbReference>
<dbReference type="InterPro" id="IPR036250">
    <property type="entry name" value="AcylCo_DH-like_C"/>
</dbReference>
<dbReference type="InterPro" id="IPR009100">
    <property type="entry name" value="AcylCoA_DH/oxidase_NM_dom_sf"/>
</dbReference>
<dbReference type="InterPro" id="IPR024677">
    <property type="entry name" value="HpaB/PvcC"/>
</dbReference>
<dbReference type="InterPro" id="IPR004925">
    <property type="entry name" value="HpaB/PvcC/4-BUDH"/>
</dbReference>
<dbReference type="InterPro" id="IPR024719">
    <property type="entry name" value="HpaB/PvcC/4-BUDH_C"/>
</dbReference>
<dbReference type="InterPro" id="IPR024674">
    <property type="entry name" value="HpaB/PvcC/4-BUDH_N"/>
</dbReference>
<dbReference type="PANTHER" id="PTHR36117">
    <property type="entry name" value="4-HYDROXYPHENYLACETATE 3-MONOOXYGENASE-RELATED"/>
    <property type="match status" value="1"/>
</dbReference>
<dbReference type="PANTHER" id="PTHR36117:SF3">
    <property type="entry name" value="4-HYDROXYPHENYLACETATE 3-MONOOXYGENASE-RELATED"/>
    <property type="match status" value="1"/>
</dbReference>
<dbReference type="Pfam" id="PF03241">
    <property type="entry name" value="HpaB"/>
    <property type="match status" value="1"/>
</dbReference>
<dbReference type="Pfam" id="PF11794">
    <property type="entry name" value="HpaB_N"/>
    <property type="match status" value="1"/>
</dbReference>
<dbReference type="PIRSF" id="PIRSF500125">
    <property type="entry name" value="4_HPA_large"/>
    <property type="match status" value="1"/>
</dbReference>
<dbReference type="PIRSF" id="PIRSF000331">
    <property type="entry name" value="HpaA_HpaB"/>
    <property type="match status" value="1"/>
</dbReference>
<dbReference type="SUPFAM" id="SSF47203">
    <property type="entry name" value="Acyl-CoA dehydrogenase C-terminal domain-like"/>
    <property type="match status" value="1"/>
</dbReference>
<dbReference type="SUPFAM" id="SSF56645">
    <property type="entry name" value="Acyl-CoA dehydrogenase NM domain-like"/>
    <property type="match status" value="1"/>
</dbReference>
<gene>
    <name evidence="6" type="primary">sgcC</name>
</gene>
<keyword id="KW-0002">3D-structure</keyword>
<keyword id="KW-0045">Antibiotic biosynthesis</keyword>
<keyword id="KW-0274">FAD</keyword>
<keyword id="KW-0285">Flavoprotein</keyword>
<keyword id="KW-0503">Monooxygenase</keyword>
<keyword id="KW-0560">Oxidoreductase</keyword>
<evidence type="ECO:0000250" key="1">
    <source>
        <dbReference type="UniProtKB" id="Q5SJP8"/>
    </source>
</evidence>
<evidence type="ECO:0000256" key="2">
    <source>
        <dbReference type="SAM" id="MobiDB-lite"/>
    </source>
</evidence>
<evidence type="ECO:0000269" key="3">
    <source>
    </source>
</evidence>
<evidence type="ECO:0000269" key="4">
    <source>
    </source>
</evidence>
<evidence type="ECO:0000269" key="5">
    <source>
    </source>
</evidence>
<evidence type="ECO:0000303" key="6">
    <source>
    </source>
</evidence>
<evidence type="ECO:0000305" key="7"/>
<evidence type="ECO:0007744" key="8">
    <source>
        <dbReference type="PDB" id="4OO2"/>
    </source>
</evidence>
<evidence type="ECO:0007829" key="9">
    <source>
        <dbReference type="PDB" id="4OO2"/>
    </source>
</evidence>
<name>SGCC_STRGL</name>